<name>GLPK_STAAC</name>
<organism>
    <name type="scientific">Staphylococcus aureus (strain COL)</name>
    <dbReference type="NCBI Taxonomy" id="93062"/>
    <lineage>
        <taxon>Bacteria</taxon>
        <taxon>Bacillati</taxon>
        <taxon>Bacillota</taxon>
        <taxon>Bacilli</taxon>
        <taxon>Bacillales</taxon>
        <taxon>Staphylococcaceae</taxon>
        <taxon>Staphylococcus</taxon>
    </lineage>
</organism>
<comment type="function">
    <text evidence="1">Key enzyme in the regulation of glycerol uptake and metabolism. Catalyzes the phosphorylation of glycerol to yield sn-glycerol 3-phosphate (By similarity).</text>
</comment>
<comment type="catalytic activity">
    <reaction evidence="2">
        <text>glycerol + ATP = sn-glycerol 3-phosphate + ADP + H(+)</text>
        <dbReference type="Rhea" id="RHEA:21644"/>
        <dbReference type="ChEBI" id="CHEBI:15378"/>
        <dbReference type="ChEBI" id="CHEBI:17754"/>
        <dbReference type="ChEBI" id="CHEBI:30616"/>
        <dbReference type="ChEBI" id="CHEBI:57597"/>
        <dbReference type="ChEBI" id="CHEBI:456216"/>
        <dbReference type="EC" id="2.7.1.30"/>
    </reaction>
</comment>
<comment type="activity regulation">
    <text evidence="2">Activated by phosphorylation and inhibited by fructose 1,6-bisphosphate (FBP).</text>
</comment>
<comment type="pathway">
    <text evidence="2">Polyol metabolism; glycerol degradation via glycerol kinase pathway; sn-glycerol 3-phosphate from glycerol: step 1/1.</text>
</comment>
<comment type="subunit">
    <text evidence="5 6">Homotetramer and homodimer (in equilibrium).</text>
</comment>
<comment type="PTM">
    <text evidence="2">The phosphoenolpyruvate-dependent sugar phosphotransferase system (PTS), including enzyme I, and histidine-containing protein (HPr) are required for the phosphorylation, which leads to the activation of the enzyme.</text>
</comment>
<comment type="similarity">
    <text evidence="2">Belongs to the FGGY kinase family.</text>
</comment>
<sequence>MEKYILSIDQGTTSSRAILFNQKGEIAGVAQREFKQYFPQSGWVEHDANEIWTSVLAVMTEVINENDVRADQIAGIGITNQRETTVVWDKHTGRPIYHAIVWQSRQTQSICSELKQQGYEQTFRDKTGLLLDPYFAGTKVKWILDNVEGAREKAENGDLLFGTIDTWLVWKLSGKAAHITDYSNASRTLMFNIHDLEWDDELLELLTVPKNMLPEVKASSEVYGKTIDYHFYGQEVPIAGVAGDQQAALFGQACFERGDVKNTYGTGGFMLMNTGDKAVKSESGLLTTIAYGIDGKVNYALEGSIFVSGSAIQWLRDGLRMINSAPQSESYATRVDSTEGVYVVPAFVGLGTPYWDSEARGAIFGLTRGTEKEHFIRATLESLCYQTRDVMEAMSKDSGIDVQSLRVDGGAVKNNFIMQFQADIVNTSVERPEIQETTALGAAFLAGLAVGFWESKDDIAKNWKLEEKFDPKMDEGEREKLYRGWKKAVEATQVFKTE</sequence>
<gene>
    <name evidence="2" type="primary">glpK</name>
    <name type="ordered locus">SACOL1320</name>
</gene>
<reference key="1">
    <citation type="journal article" date="2005" name="J. Bacteriol.">
        <title>Insights on evolution of virulence and resistance from the complete genome analysis of an early methicillin-resistant Staphylococcus aureus strain and a biofilm-producing methicillin-resistant Staphylococcus epidermidis strain.</title>
        <authorList>
            <person name="Gill S.R."/>
            <person name="Fouts D.E."/>
            <person name="Archer G.L."/>
            <person name="Mongodin E.F."/>
            <person name="DeBoy R.T."/>
            <person name="Ravel J."/>
            <person name="Paulsen I.T."/>
            <person name="Kolonay J.F."/>
            <person name="Brinkac L.M."/>
            <person name="Beanan M.J."/>
            <person name="Dodson R.J."/>
            <person name="Daugherty S.C."/>
            <person name="Madupu R."/>
            <person name="Angiuoli S.V."/>
            <person name="Durkin A.S."/>
            <person name="Haft D.H."/>
            <person name="Vamathevan J.J."/>
            <person name="Khouri H."/>
            <person name="Utterback T.R."/>
            <person name="Lee C."/>
            <person name="Dimitrov G."/>
            <person name="Jiang L."/>
            <person name="Qin H."/>
            <person name="Weidman J."/>
            <person name="Tran K."/>
            <person name="Kang K.H."/>
            <person name="Hance I.R."/>
            <person name="Nelson K.E."/>
            <person name="Fraser C.M."/>
        </authorList>
    </citation>
    <scope>NUCLEOTIDE SEQUENCE [LARGE SCALE GENOMIC DNA]</scope>
    <source>
        <strain>COL</strain>
    </source>
</reference>
<reference evidence="7" key="2">
    <citation type="submission" date="2009-01" db="PDB data bank">
        <title>1.9 Angstrom crystal structure of glycerol kinase (glpk) from Staphylococcus aureus in complex with glycerol.</title>
        <authorList>
            <consortium name="Center for structural genomics of infectious diseases (CSGID)"/>
        </authorList>
    </citation>
    <scope>X-RAY CRYSTALLOGRAPHY (1.9 ANGSTROMS) IN COMPLEX WITH GLYCEROL</scope>
    <scope>SUBUNIT</scope>
</reference>
<reference evidence="8" key="3">
    <citation type="submission" date="2009-02" db="PDB data bank">
        <title>2.7 Angstrom crystal structure of glycerol kinase (glpk) from Staphylococcus aureus in complex with ADP and glycerol.</title>
        <authorList>
            <consortium name="Center for structural genomics of infectious diseases (CSGID)"/>
        </authorList>
    </citation>
    <scope>X-RAY CRYSTALLOGRAPHY (2.7 ANGSTROMS) IN COMPLEX WITH GLYCEROL AND ADP</scope>
    <scope>SUBUNIT</scope>
</reference>
<accession>Q5HGD2</accession>
<proteinExistence type="evidence at protein level"/>
<feature type="chain" id="PRO_0000059489" description="Glycerol kinase">
    <location>
        <begin position="1"/>
        <end position="498"/>
    </location>
</feature>
<feature type="binding site" evidence="2 4 8">
    <location>
        <position position="12"/>
    </location>
    <ligand>
        <name>ADP</name>
        <dbReference type="ChEBI" id="CHEBI:456216"/>
    </ligand>
</feature>
<feature type="binding site" evidence="2">
    <location>
        <position position="12"/>
    </location>
    <ligand>
        <name>ATP</name>
        <dbReference type="ChEBI" id="CHEBI:30616"/>
    </ligand>
</feature>
<feature type="binding site" evidence="2">
    <location>
        <position position="12"/>
    </location>
    <ligand>
        <name>sn-glycerol 3-phosphate</name>
        <dbReference type="ChEBI" id="CHEBI:57597"/>
    </ligand>
</feature>
<feature type="binding site" evidence="2">
    <location>
        <position position="13"/>
    </location>
    <ligand>
        <name>ATP</name>
        <dbReference type="ChEBI" id="CHEBI:30616"/>
    </ligand>
</feature>
<feature type="binding site" evidence="2">
    <location>
        <position position="14"/>
    </location>
    <ligand>
        <name>ATP</name>
        <dbReference type="ChEBI" id="CHEBI:30616"/>
    </ligand>
</feature>
<feature type="binding site" evidence="2 4 8">
    <location>
        <position position="16"/>
    </location>
    <ligand>
        <name>ADP</name>
        <dbReference type="ChEBI" id="CHEBI:456216"/>
    </ligand>
</feature>
<feature type="binding site" evidence="2 3 4 7 8">
    <location>
        <position position="82"/>
    </location>
    <ligand>
        <name>glycerol</name>
        <dbReference type="ChEBI" id="CHEBI:17754"/>
    </ligand>
</feature>
<feature type="binding site" evidence="2">
    <location>
        <position position="82"/>
    </location>
    <ligand>
        <name>sn-glycerol 3-phosphate</name>
        <dbReference type="ChEBI" id="CHEBI:57597"/>
    </ligand>
</feature>
<feature type="binding site" evidence="2 3 4 7 8">
    <location>
        <position position="83"/>
    </location>
    <ligand>
        <name>glycerol</name>
        <dbReference type="ChEBI" id="CHEBI:17754"/>
    </ligand>
</feature>
<feature type="binding site" evidence="2">
    <location>
        <position position="83"/>
    </location>
    <ligand>
        <name>sn-glycerol 3-phosphate</name>
        <dbReference type="ChEBI" id="CHEBI:57597"/>
    </ligand>
</feature>
<feature type="binding site" evidence="2 3 4 7 8">
    <location>
        <position position="134"/>
    </location>
    <ligand>
        <name>glycerol</name>
        <dbReference type="ChEBI" id="CHEBI:17754"/>
    </ligand>
</feature>
<feature type="binding site" evidence="2">
    <location>
        <position position="134"/>
    </location>
    <ligand>
        <name>sn-glycerol 3-phosphate</name>
        <dbReference type="ChEBI" id="CHEBI:57597"/>
    </ligand>
</feature>
<feature type="binding site" evidence="2 3 4 7 8">
    <location>
        <position position="244"/>
    </location>
    <ligand>
        <name>glycerol</name>
        <dbReference type="ChEBI" id="CHEBI:17754"/>
    </ligand>
</feature>
<feature type="binding site" evidence="2">
    <location>
        <position position="244"/>
    </location>
    <ligand>
        <name>sn-glycerol 3-phosphate</name>
        <dbReference type="ChEBI" id="CHEBI:57597"/>
    </ligand>
</feature>
<feature type="binding site" evidence="2 3 4 7 8">
    <location>
        <position position="245"/>
    </location>
    <ligand>
        <name>glycerol</name>
        <dbReference type="ChEBI" id="CHEBI:17754"/>
    </ligand>
</feature>
<feature type="binding site" evidence="2 4 8">
    <location>
        <position position="266"/>
    </location>
    <ligand>
        <name>ADP</name>
        <dbReference type="ChEBI" id="CHEBI:456216"/>
    </ligand>
</feature>
<feature type="binding site" evidence="2">
    <location>
        <position position="266"/>
    </location>
    <ligand>
        <name>ATP</name>
        <dbReference type="ChEBI" id="CHEBI:30616"/>
    </ligand>
</feature>
<feature type="binding site" evidence="2 4 8">
    <location>
        <position position="309"/>
    </location>
    <ligand>
        <name>ADP</name>
        <dbReference type="ChEBI" id="CHEBI:456216"/>
    </ligand>
</feature>
<feature type="binding site" evidence="2">
    <location>
        <position position="309"/>
    </location>
    <ligand>
        <name>ATP</name>
        <dbReference type="ChEBI" id="CHEBI:30616"/>
    </ligand>
</feature>
<feature type="binding site" evidence="4 8">
    <location>
        <position position="313"/>
    </location>
    <ligand>
        <name>ADP</name>
        <dbReference type="ChEBI" id="CHEBI:456216"/>
    </ligand>
</feature>
<feature type="binding site" evidence="2">
    <location>
        <position position="313"/>
    </location>
    <ligand>
        <name>ATP</name>
        <dbReference type="ChEBI" id="CHEBI:30616"/>
    </ligand>
</feature>
<feature type="binding site" evidence="2 4 8">
    <location>
        <position position="410"/>
    </location>
    <ligand>
        <name>ADP</name>
        <dbReference type="ChEBI" id="CHEBI:456216"/>
    </ligand>
</feature>
<feature type="binding site" evidence="2">
    <location>
        <position position="410"/>
    </location>
    <ligand>
        <name>ATP</name>
        <dbReference type="ChEBI" id="CHEBI:30616"/>
    </ligand>
</feature>
<feature type="binding site" evidence="2 4 8">
    <location>
        <position position="414"/>
    </location>
    <ligand>
        <name>ADP</name>
        <dbReference type="ChEBI" id="CHEBI:456216"/>
    </ligand>
</feature>
<feature type="modified residue" description="Phosphohistidine; by HPr" evidence="2">
    <location>
        <position position="230"/>
    </location>
</feature>
<feature type="strand" evidence="9">
    <location>
        <begin position="4"/>
        <end position="10"/>
    </location>
</feature>
<feature type="strand" evidence="9">
    <location>
        <begin position="12"/>
        <end position="20"/>
    </location>
</feature>
<feature type="strand" evidence="9">
    <location>
        <begin position="26"/>
        <end position="33"/>
    </location>
</feature>
<feature type="helix" evidence="9">
    <location>
        <begin position="48"/>
        <end position="64"/>
    </location>
</feature>
<feature type="turn" evidence="9">
    <location>
        <begin position="65"/>
        <end position="67"/>
    </location>
</feature>
<feature type="helix" evidence="9">
    <location>
        <begin position="70"/>
        <end position="72"/>
    </location>
</feature>
<feature type="strand" evidence="9">
    <location>
        <begin position="73"/>
        <end position="80"/>
    </location>
</feature>
<feature type="strand" evidence="9">
    <location>
        <begin position="85"/>
        <end position="89"/>
    </location>
</feature>
<feature type="turn" evidence="9">
    <location>
        <begin position="90"/>
        <end position="92"/>
    </location>
</feature>
<feature type="strand" evidence="9">
    <location>
        <begin position="95"/>
        <end position="97"/>
    </location>
</feature>
<feature type="helix" evidence="9">
    <location>
        <begin position="108"/>
        <end position="116"/>
    </location>
</feature>
<feature type="helix" evidence="9">
    <location>
        <begin position="120"/>
        <end position="127"/>
    </location>
</feature>
<feature type="helix" evidence="9">
    <location>
        <begin position="136"/>
        <end position="146"/>
    </location>
</feature>
<feature type="helix" evidence="9">
    <location>
        <begin position="150"/>
        <end position="155"/>
    </location>
</feature>
<feature type="strand" evidence="9">
    <location>
        <begin position="159"/>
        <end position="163"/>
    </location>
</feature>
<feature type="helix" evidence="9">
    <location>
        <begin position="164"/>
        <end position="172"/>
    </location>
</feature>
<feature type="turn" evidence="9">
    <location>
        <begin position="173"/>
        <end position="175"/>
    </location>
</feature>
<feature type="strand" evidence="9">
    <location>
        <begin position="179"/>
        <end position="181"/>
    </location>
</feature>
<feature type="helix" evidence="9">
    <location>
        <begin position="182"/>
        <end position="185"/>
    </location>
</feature>
<feature type="strand" evidence="9">
    <location>
        <begin position="188"/>
        <end position="192"/>
    </location>
</feature>
<feature type="turn" evidence="9">
    <location>
        <begin position="193"/>
        <end position="196"/>
    </location>
</feature>
<feature type="helix" evidence="9">
    <location>
        <begin position="200"/>
        <end position="206"/>
    </location>
</feature>
<feature type="helix" evidence="9">
    <location>
        <begin position="210"/>
        <end position="212"/>
    </location>
</feature>
<feature type="strand" evidence="9">
    <location>
        <begin position="215"/>
        <end position="217"/>
    </location>
</feature>
<feature type="strand" evidence="9">
    <location>
        <begin position="219"/>
        <end position="225"/>
    </location>
</feature>
<feature type="helix" evidence="9">
    <location>
        <begin position="228"/>
        <end position="230"/>
    </location>
</feature>
<feature type="turn" evidence="9">
    <location>
        <begin position="231"/>
        <end position="233"/>
    </location>
</feature>
<feature type="strand" evidence="9">
    <location>
        <begin position="237"/>
        <end position="243"/>
    </location>
</feature>
<feature type="helix" evidence="9">
    <location>
        <begin position="244"/>
        <end position="251"/>
    </location>
</feature>
<feature type="strand" evidence="9">
    <location>
        <begin position="260"/>
        <end position="273"/>
    </location>
</feature>
<feature type="strand" evidence="9">
    <location>
        <begin position="282"/>
        <end position="284"/>
    </location>
</feature>
<feature type="strand" evidence="9">
    <location>
        <begin position="286"/>
        <end position="293"/>
    </location>
</feature>
<feature type="strand" evidence="9">
    <location>
        <begin position="296"/>
        <end position="306"/>
    </location>
</feature>
<feature type="helix" evidence="9">
    <location>
        <begin position="310"/>
        <end position="317"/>
    </location>
</feature>
<feature type="helix" evidence="9">
    <location>
        <begin position="325"/>
        <end position="327"/>
    </location>
</feature>
<feature type="helix" evidence="9">
    <location>
        <begin position="328"/>
        <end position="332"/>
    </location>
</feature>
<feature type="strand" evidence="9">
    <location>
        <begin position="342"/>
        <end position="344"/>
    </location>
</feature>
<feature type="turn" evidence="9">
    <location>
        <begin position="352"/>
        <end position="354"/>
    </location>
</feature>
<feature type="strand" evidence="9">
    <location>
        <begin position="361"/>
        <end position="366"/>
    </location>
</feature>
<feature type="helix" evidence="9">
    <location>
        <begin position="372"/>
        <end position="397"/>
    </location>
</feature>
<feature type="strand" evidence="9">
    <location>
        <begin position="403"/>
        <end position="409"/>
    </location>
</feature>
<feature type="helix" evidence="9">
    <location>
        <begin position="410"/>
        <end position="413"/>
    </location>
</feature>
<feature type="helix" evidence="9">
    <location>
        <begin position="415"/>
        <end position="425"/>
    </location>
</feature>
<feature type="strand" evidence="9">
    <location>
        <begin position="427"/>
        <end position="433"/>
    </location>
</feature>
<feature type="helix" evidence="9">
    <location>
        <begin position="437"/>
        <end position="449"/>
    </location>
</feature>
<feature type="strand" evidence="9">
    <location>
        <begin position="452"/>
        <end position="454"/>
    </location>
</feature>
<feature type="helix" evidence="9">
    <location>
        <begin position="457"/>
        <end position="462"/>
    </location>
</feature>
<feature type="strand" evidence="9">
    <location>
        <begin position="465"/>
        <end position="469"/>
    </location>
</feature>
<feature type="helix" evidence="9">
    <location>
        <begin position="475"/>
        <end position="494"/>
    </location>
</feature>
<evidence type="ECO:0000250" key="1"/>
<evidence type="ECO:0000255" key="2">
    <source>
        <dbReference type="HAMAP-Rule" id="MF_00186"/>
    </source>
</evidence>
<evidence type="ECO:0000269" key="3">
    <source ref="2"/>
</evidence>
<evidence type="ECO:0000269" key="4">
    <source ref="3"/>
</evidence>
<evidence type="ECO:0000305" key="5">
    <source ref="2"/>
</evidence>
<evidence type="ECO:0000305" key="6">
    <source ref="3"/>
</evidence>
<evidence type="ECO:0007744" key="7">
    <source>
        <dbReference type="PDB" id="3G25"/>
    </source>
</evidence>
<evidence type="ECO:0007744" key="8">
    <source>
        <dbReference type="PDB" id="3GE1"/>
    </source>
</evidence>
<evidence type="ECO:0007829" key="9">
    <source>
        <dbReference type="PDB" id="3G25"/>
    </source>
</evidence>
<protein>
    <recommendedName>
        <fullName evidence="2">Glycerol kinase</fullName>
        <ecNumber evidence="2">2.7.1.30</ecNumber>
    </recommendedName>
    <alternativeName>
        <fullName evidence="2">ATP:glycerol 3-phosphotransferase</fullName>
    </alternativeName>
    <alternativeName>
        <fullName evidence="2">Glycerokinase</fullName>
        <shortName evidence="2">GK</shortName>
    </alternativeName>
</protein>
<dbReference type="EC" id="2.7.1.30" evidence="2"/>
<dbReference type="EMBL" id="CP000046">
    <property type="protein sequence ID" value="AAW38149.1"/>
    <property type="molecule type" value="Genomic_DNA"/>
</dbReference>
<dbReference type="RefSeq" id="WP_000417369.1">
    <property type="nucleotide sequence ID" value="NZ_JBGOFO010000002.1"/>
</dbReference>
<dbReference type="PDB" id="3G25">
    <property type="method" value="X-ray"/>
    <property type="resolution" value="1.90 A"/>
    <property type="chains" value="A/B/C/D=1-498"/>
</dbReference>
<dbReference type="PDB" id="3GE1">
    <property type="method" value="X-ray"/>
    <property type="resolution" value="2.70 A"/>
    <property type="chains" value="A/B/C/D=1-498"/>
</dbReference>
<dbReference type="PDBsum" id="3G25"/>
<dbReference type="PDBsum" id="3GE1"/>
<dbReference type="SMR" id="Q5HGD2"/>
<dbReference type="KEGG" id="sac:SACOL1320"/>
<dbReference type="HOGENOM" id="CLU_009281_2_3_9"/>
<dbReference type="UniPathway" id="UPA00618">
    <property type="reaction ID" value="UER00672"/>
</dbReference>
<dbReference type="EvolutionaryTrace" id="Q5HGD2"/>
<dbReference type="Proteomes" id="UP000000530">
    <property type="component" value="Chromosome"/>
</dbReference>
<dbReference type="GO" id="GO:0005829">
    <property type="term" value="C:cytosol"/>
    <property type="evidence" value="ECO:0007669"/>
    <property type="project" value="TreeGrafter"/>
</dbReference>
<dbReference type="GO" id="GO:0005524">
    <property type="term" value="F:ATP binding"/>
    <property type="evidence" value="ECO:0007669"/>
    <property type="project" value="UniProtKB-UniRule"/>
</dbReference>
<dbReference type="GO" id="GO:0004370">
    <property type="term" value="F:glycerol kinase activity"/>
    <property type="evidence" value="ECO:0000250"/>
    <property type="project" value="UniProtKB"/>
</dbReference>
<dbReference type="GO" id="GO:0019563">
    <property type="term" value="P:glycerol catabolic process"/>
    <property type="evidence" value="ECO:0007669"/>
    <property type="project" value="UniProtKB-UniRule"/>
</dbReference>
<dbReference type="GO" id="GO:0006071">
    <property type="term" value="P:glycerol metabolic process"/>
    <property type="evidence" value="ECO:0000250"/>
    <property type="project" value="UniProtKB"/>
</dbReference>
<dbReference type="GO" id="GO:0006072">
    <property type="term" value="P:glycerol-3-phosphate metabolic process"/>
    <property type="evidence" value="ECO:0007669"/>
    <property type="project" value="InterPro"/>
</dbReference>
<dbReference type="CDD" id="cd07786">
    <property type="entry name" value="FGGY_EcGK_like"/>
    <property type="match status" value="1"/>
</dbReference>
<dbReference type="FunFam" id="3.30.420.40:FF:000007">
    <property type="entry name" value="Glycerol kinase"/>
    <property type="match status" value="1"/>
</dbReference>
<dbReference type="FunFam" id="3.30.420.40:FF:000008">
    <property type="entry name" value="Glycerol kinase"/>
    <property type="match status" value="1"/>
</dbReference>
<dbReference type="Gene3D" id="3.30.420.40">
    <property type="match status" value="2"/>
</dbReference>
<dbReference type="HAMAP" id="MF_00186">
    <property type="entry name" value="Glycerol_kin"/>
    <property type="match status" value="1"/>
</dbReference>
<dbReference type="InterPro" id="IPR043129">
    <property type="entry name" value="ATPase_NBD"/>
</dbReference>
<dbReference type="InterPro" id="IPR000577">
    <property type="entry name" value="Carb_kinase_FGGY"/>
</dbReference>
<dbReference type="InterPro" id="IPR018483">
    <property type="entry name" value="Carb_kinase_FGGY_CS"/>
</dbReference>
<dbReference type="InterPro" id="IPR018485">
    <property type="entry name" value="FGGY_C"/>
</dbReference>
<dbReference type="InterPro" id="IPR018484">
    <property type="entry name" value="FGGY_N"/>
</dbReference>
<dbReference type="InterPro" id="IPR005999">
    <property type="entry name" value="Glycerol_kin"/>
</dbReference>
<dbReference type="NCBIfam" id="TIGR01311">
    <property type="entry name" value="glycerol_kin"/>
    <property type="match status" value="1"/>
</dbReference>
<dbReference type="NCBIfam" id="NF000756">
    <property type="entry name" value="PRK00047.1"/>
    <property type="match status" value="1"/>
</dbReference>
<dbReference type="PANTHER" id="PTHR10196:SF69">
    <property type="entry name" value="GLYCEROL KINASE"/>
    <property type="match status" value="1"/>
</dbReference>
<dbReference type="PANTHER" id="PTHR10196">
    <property type="entry name" value="SUGAR KINASE"/>
    <property type="match status" value="1"/>
</dbReference>
<dbReference type="Pfam" id="PF02782">
    <property type="entry name" value="FGGY_C"/>
    <property type="match status" value="1"/>
</dbReference>
<dbReference type="Pfam" id="PF00370">
    <property type="entry name" value="FGGY_N"/>
    <property type="match status" value="1"/>
</dbReference>
<dbReference type="PIRSF" id="PIRSF000538">
    <property type="entry name" value="GlpK"/>
    <property type="match status" value="1"/>
</dbReference>
<dbReference type="SUPFAM" id="SSF53067">
    <property type="entry name" value="Actin-like ATPase domain"/>
    <property type="match status" value="2"/>
</dbReference>
<dbReference type="PROSITE" id="PS00445">
    <property type="entry name" value="FGGY_KINASES_2"/>
    <property type="match status" value="1"/>
</dbReference>
<keyword id="KW-0002">3D-structure</keyword>
<keyword id="KW-0067">ATP-binding</keyword>
<keyword id="KW-0319">Glycerol metabolism</keyword>
<keyword id="KW-0418">Kinase</keyword>
<keyword id="KW-0547">Nucleotide-binding</keyword>
<keyword id="KW-0597">Phosphoprotein</keyword>
<keyword id="KW-0808">Transferase</keyword>